<sequence length="644" mass="75461">MLEEKFLDLLAQKYDSEEKVVTEIINLEAILDLPKGTEHFVSDLHGEYQAFQHVLRNGSGKVKEKIRDIFKHELSEKEINEFATLIYYPEEKLQLIRNQFDNKQELNAWYTKTIDQMIRLIPYASSKYTRTKLRKALPKQFVYIIEELLYKTDEYTNKKHYYSKIVQKVISLGQADKLIIGLAYTTQQLVVDHLHVVGDIYDRGPEPDKIMEALINYHSLDIQWGNHDVLWIGAFSGSKVCLANILRICARYDNLDIIEDVYGINLRPLLNLAEKYYKDNPAFRPKRHSNKKLSDQEQSQITKIHQAIAMIQFKLEMPIIKRRPYFNMSKRLLLEKVDYENNKITIDGKTYPLENTCFATVNPDQPDELLEEEKQVMDKLLFSVQHSEKLARHMEFLMKKGTLYLRYNGNLLIHGCIPIDENGNMEKMFIENKTYAGRELLDIFENYLLHAFSNREATDDLATDMVWYLWTGEYSSLFGKREMTTFERYFIKDKALHKERKNPYYYLREKEGICRMILEEFDLDPDQGHIINGHTPVKEIEGENPIKANGKMIVIDGGFSKAYQPTTGIAGYTLLYNSFGMQLVAHQHFNSKEDVLQNGNDVLSVKRLVDEELERKKISETNIGEKLIEDINMLNSLLKYRYLK</sequence>
<gene>
    <name evidence="1" type="primary">fbp</name>
    <name type="ordered locus">OB2859</name>
</gene>
<comment type="catalytic activity">
    <reaction evidence="1">
        <text>beta-D-fructose 1,6-bisphosphate + H2O = beta-D-fructose 6-phosphate + phosphate</text>
        <dbReference type="Rhea" id="RHEA:11064"/>
        <dbReference type="ChEBI" id="CHEBI:15377"/>
        <dbReference type="ChEBI" id="CHEBI:32966"/>
        <dbReference type="ChEBI" id="CHEBI:43474"/>
        <dbReference type="ChEBI" id="CHEBI:57634"/>
        <dbReference type="EC" id="3.1.3.11"/>
    </reaction>
</comment>
<comment type="cofactor">
    <cofactor evidence="1">
        <name>Mn(2+)</name>
        <dbReference type="ChEBI" id="CHEBI:29035"/>
    </cofactor>
</comment>
<comment type="pathway">
    <text evidence="1">Carbohydrate biosynthesis; gluconeogenesis.</text>
</comment>
<comment type="similarity">
    <text evidence="1">Belongs to the FBPase class 3 family.</text>
</comment>
<name>F16PC_OCEIH</name>
<organism>
    <name type="scientific">Oceanobacillus iheyensis (strain DSM 14371 / CIP 107618 / JCM 11309 / KCTC 3954 / HTE831)</name>
    <dbReference type="NCBI Taxonomy" id="221109"/>
    <lineage>
        <taxon>Bacteria</taxon>
        <taxon>Bacillati</taxon>
        <taxon>Bacillota</taxon>
        <taxon>Bacilli</taxon>
        <taxon>Bacillales</taxon>
        <taxon>Bacillaceae</taxon>
        <taxon>Oceanobacillus</taxon>
    </lineage>
</organism>
<keyword id="KW-0119">Carbohydrate metabolism</keyword>
<keyword id="KW-0378">Hydrolase</keyword>
<keyword id="KW-0464">Manganese</keyword>
<keyword id="KW-1185">Reference proteome</keyword>
<dbReference type="EC" id="3.1.3.11" evidence="1"/>
<dbReference type="EMBL" id="BA000028">
    <property type="protein sequence ID" value="BAC14815.1"/>
    <property type="molecule type" value="Genomic_DNA"/>
</dbReference>
<dbReference type="STRING" id="221109.gene:10735111"/>
<dbReference type="KEGG" id="oih:OB2859"/>
<dbReference type="eggNOG" id="COG3855">
    <property type="taxonomic scope" value="Bacteria"/>
</dbReference>
<dbReference type="HOGENOM" id="CLU_028392_2_0_9"/>
<dbReference type="PhylomeDB" id="Q8EMI3"/>
<dbReference type="UniPathway" id="UPA00138"/>
<dbReference type="Proteomes" id="UP000000822">
    <property type="component" value="Chromosome"/>
</dbReference>
<dbReference type="GO" id="GO:0042132">
    <property type="term" value="F:fructose 1,6-bisphosphate 1-phosphatase activity"/>
    <property type="evidence" value="ECO:0007669"/>
    <property type="project" value="UniProtKB-UniRule"/>
</dbReference>
<dbReference type="GO" id="GO:0006094">
    <property type="term" value="P:gluconeogenesis"/>
    <property type="evidence" value="ECO:0007669"/>
    <property type="project" value="UniProtKB-UniRule"/>
</dbReference>
<dbReference type="Gene3D" id="3.60.21.10">
    <property type="match status" value="1"/>
</dbReference>
<dbReference type="HAMAP" id="MF_01854">
    <property type="entry name" value="FBPase_class3"/>
    <property type="match status" value="1"/>
</dbReference>
<dbReference type="InterPro" id="IPR009164">
    <property type="entry name" value="FBPtase_class3"/>
</dbReference>
<dbReference type="InterPro" id="IPR029052">
    <property type="entry name" value="Metallo-depent_PP-like"/>
</dbReference>
<dbReference type="Pfam" id="PF06874">
    <property type="entry name" value="FBPase_2"/>
    <property type="match status" value="1"/>
</dbReference>
<dbReference type="PIRSF" id="PIRSF000906">
    <property type="entry name" value="FBPtase_Bacill"/>
    <property type="match status" value="1"/>
</dbReference>
<dbReference type="SUPFAM" id="SSF56300">
    <property type="entry name" value="Metallo-dependent phosphatases"/>
    <property type="match status" value="2"/>
</dbReference>
<accession>Q8EMI3</accession>
<feature type="chain" id="PRO_0000363104" description="Fructose-1,6-bisphosphatase class 3">
    <location>
        <begin position="1"/>
        <end position="644"/>
    </location>
</feature>
<reference key="1">
    <citation type="journal article" date="2002" name="Nucleic Acids Res.">
        <title>Genome sequence of Oceanobacillus iheyensis isolated from the Iheya Ridge and its unexpected adaptive capabilities to extreme environments.</title>
        <authorList>
            <person name="Takami H."/>
            <person name="Takaki Y."/>
            <person name="Uchiyama I."/>
        </authorList>
    </citation>
    <scope>NUCLEOTIDE SEQUENCE [LARGE SCALE GENOMIC DNA]</scope>
    <source>
        <strain>DSM 14371 / CIP 107618 / JCM 11309 / KCTC 3954 / HTE831</strain>
    </source>
</reference>
<protein>
    <recommendedName>
        <fullName evidence="1">Fructose-1,6-bisphosphatase class 3</fullName>
        <shortName evidence="1">FBPase class 3</shortName>
        <ecNumber evidence="1">3.1.3.11</ecNumber>
    </recommendedName>
    <alternativeName>
        <fullName evidence="1">D-fructose-1,6-bisphosphate 1-phosphohydrolase class 3</fullName>
    </alternativeName>
</protein>
<evidence type="ECO:0000255" key="1">
    <source>
        <dbReference type="HAMAP-Rule" id="MF_01854"/>
    </source>
</evidence>
<proteinExistence type="inferred from homology"/>